<proteinExistence type="evidence at protein level"/>
<protein>
    <recommendedName>
        <fullName evidence="14">Xyloglucan endotransglucosylase protein 1</fullName>
        <shortName evidence="14">XET protein 1</shortName>
        <ecNumber evidence="7 9">2.4.1.207</ecNumber>
    </recommendedName>
    <alternativeName>
        <fullName evidence="11 12 13">DkXTH1</fullName>
    </alternativeName>
    <alternativeName>
        <fullName evidence="14">Xyloglucan endotransglucosylase/hydrolase protein 1</fullName>
        <shortName evidence="14">XTH protein 1</shortName>
    </alternativeName>
</protein>
<comment type="function">
    <text evidence="9 10">Catalyzes xyloglucan endotransglycosylation (XET). Cleaves and religates xyloglucan polymers. Does not catalyze xyloglucan endohydrolysis (XEH) (PubMed:25849978). Overexpression in Arabidopsis transgenic plants results in elevated tolerance to abiotic stress, such as salt, ABA (abscisic acid) and drought stresses, and in the production of wider leaves. Overexpression in transgenic tomato plants slows down fruit ripening and softening, and the plants produce larger fruits. Both transgenic plants have larger and more irregular cells. Moreover, the fruits of the transgenic tomato have higher density of cell wall and intercellular spaces. May provide cells with more strength and thickness to maintain structural integrity (PubMed:28155115). Probably involved in cell wall assembly and synthesis in fast growing tissues and in the maintenance of firmness in mature fruits (PubMed:25849978, PubMed:28155115).</text>
</comment>
<comment type="catalytic activity">
    <reaction evidence="7 9">
        <text>breaks a beta-(1-&gt;4) bond in the backbone of a xyloglucan and transfers the xyloglucanyl segment on to O-4 of the non-reducing terminal glucose residue of an acceptor, which can be a xyloglucan or an oligosaccharide of xyloglucan.</text>
        <dbReference type="EC" id="2.4.1.207"/>
    </reaction>
</comment>
<comment type="biophysicochemical properties">
    <phDependence>
        <text evidence="9">Optimum pH is between 5-5.5. Loses activity rapidly when pH is lowered from 5 to 4.</text>
    </phDependence>
</comment>
<comment type="subcellular location">
    <subcellularLocation>
        <location evidence="7 9">Secreted</location>
        <location evidence="7 9">Cell wall</location>
    </subcellularLocation>
    <subcellularLocation>
        <location evidence="7">Secreted</location>
        <location evidence="7">Extracellular space</location>
        <location evidence="7">Apoplast</location>
    </subcellularLocation>
</comment>
<comment type="tissue specificity">
    <text evidence="8 9 10">Expressed in fruit pulp (PubMed:23265513, PubMed:25849978). Expressed in leaves, flowers, calyces, stems and fruits. Highest expression in leaves and lowest in fruits (PubMed:28155115).</text>
</comment>
<comment type="developmental stage">
    <text evidence="8 9 10">Expressed during fruit ripening (PubMed:23265513, PubMed:25849978, PubMed:28155115). During storage, highest expression is on day 3, decreasing until day 12 where expression increases again, but after which it decreases sharply until end of storage (day 18) (PubMed:23265513). Expression is very high in immature growing fruits, with the highest expression 100 days after full bloom, after which expressed at low levels during the mature stage (PubMed:25849978, PubMed:28155115). Expression in fruits during storage at 25 degrees Celsius is lower than the expression at the time of harvest (PubMed:25849978). Expression in young leaves is significantly higher than in mature leaves (PubMed:28155115).</text>
</comment>
<comment type="induction">
    <text evidence="8 9">In fruits, expression is decreased by gibberellic acid (GA3) or 1-methylcyclopropene (1-MCP) at the beginning of storage (until day 6) (PubMed:23265513). Expression in harvested fruits is increased by low (0 degrees Celsius) temperature treatment, particularly at the end of storage (day 32) (PubMed:25849978).</text>
</comment>
<comment type="PTM">
    <text evidence="7">Contains at least one intrachain disulfide bond essential for its enzymatic activity.</text>
</comment>
<comment type="similarity">
    <text evidence="14">Belongs to the glycosyl hydrolase 16 family. XTH group 2 subfamily.</text>
</comment>
<evidence type="ECO:0000250" key="1">
    <source>
        <dbReference type="UniProtKB" id="Q8GZD5"/>
    </source>
</evidence>
<evidence type="ECO:0000255" key="2">
    <source>
        <dbReference type="PIRSR" id="PIRSR005604-1"/>
    </source>
</evidence>
<evidence type="ECO:0000255" key="3">
    <source>
        <dbReference type="PIRSR" id="PIRSR005604-2"/>
    </source>
</evidence>
<evidence type="ECO:0000255" key="4">
    <source>
        <dbReference type="PROSITE-ProRule" id="PRU00498"/>
    </source>
</evidence>
<evidence type="ECO:0000255" key="5">
    <source>
        <dbReference type="PROSITE-ProRule" id="PRU01098"/>
    </source>
</evidence>
<evidence type="ECO:0000255" key="6">
    <source>
        <dbReference type="PROSITE-ProRule" id="PRU10064"/>
    </source>
</evidence>
<evidence type="ECO:0000255" key="7">
    <source>
        <dbReference type="RuleBase" id="RU361120"/>
    </source>
</evidence>
<evidence type="ECO:0000269" key="8">
    <source>
    </source>
</evidence>
<evidence type="ECO:0000269" key="9">
    <source>
    </source>
</evidence>
<evidence type="ECO:0000269" key="10">
    <source>
    </source>
</evidence>
<evidence type="ECO:0000303" key="11">
    <source>
    </source>
</evidence>
<evidence type="ECO:0000303" key="12">
    <source>
    </source>
</evidence>
<evidence type="ECO:0000303" key="13">
    <source>
    </source>
</evidence>
<evidence type="ECO:0000305" key="14"/>
<evidence type="ECO:0000312" key="15">
    <source>
        <dbReference type="EMBL" id="AEQ37175.1"/>
    </source>
</evidence>
<dbReference type="EC" id="2.4.1.207" evidence="7 9"/>
<dbReference type="EMBL" id="JN605344">
    <property type="protein sequence ID" value="AEQ37175.1"/>
    <property type="molecule type" value="mRNA"/>
</dbReference>
<dbReference type="SMR" id="G5DAC6"/>
<dbReference type="GlyCosmos" id="G5DAC6">
    <property type="glycosylation" value="1 site, No reported glycans"/>
</dbReference>
<dbReference type="BRENDA" id="2.4.1.207">
    <property type="organism ID" value="7744"/>
</dbReference>
<dbReference type="GO" id="GO:0048046">
    <property type="term" value="C:apoplast"/>
    <property type="evidence" value="ECO:0007669"/>
    <property type="project" value="UniProtKB-SubCell"/>
</dbReference>
<dbReference type="GO" id="GO:0004553">
    <property type="term" value="F:hydrolase activity, hydrolyzing O-glycosyl compounds"/>
    <property type="evidence" value="ECO:0007669"/>
    <property type="project" value="InterPro"/>
</dbReference>
<dbReference type="GO" id="GO:0016762">
    <property type="term" value="F:xyloglucan:xyloglucosyl transferase activity"/>
    <property type="evidence" value="ECO:0007669"/>
    <property type="project" value="UniProtKB-EC"/>
</dbReference>
<dbReference type="GO" id="GO:0042546">
    <property type="term" value="P:cell wall biogenesis"/>
    <property type="evidence" value="ECO:0007669"/>
    <property type="project" value="InterPro"/>
</dbReference>
<dbReference type="GO" id="GO:0071555">
    <property type="term" value="P:cell wall organization"/>
    <property type="evidence" value="ECO:0007669"/>
    <property type="project" value="UniProtKB-KW"/>
</dbReference>
<dbReference type="GO" id="GO:0009835">
    <property type="term" value="P:fruit ripening"/>
    <property type="evidence" value="ECO:0007669"/>
    <property type="project" value="UniProtKB-KW"/>
</dbReference>
<dbReference type="GO" id="GO:0010411">
    <property type="term" value="P:xyloglucan metabolic process"/>
    <property type="evidence" value="ECO:0007669"/>
    <property type="project" value="InterPro"/>
</dbReference>
<dbReference type="CDD" id="cd02176">
    <property type="entry name" value="GH16_XET"/>
    <property type="match status" value="1"/>
</dbReference>
<dbReference type="FunFam" id="2.60.120.200:FF:000025">
    <property type="entry name" value="Xyloglucan endotransglucosylase/hydrolase"/>
    <property type="match status" value="1"/>
</dbReference>
<dbReference type="Gene3D" id="2.60.120.200">
    <property type="match status" value="1"/>
</dbReference>
<dbReference type="InterPro" id="IPR044791">
    <property type="entry name" value="Beta-glucanase/XTH"/>
</dbReference>
<dbReference type="InterPro" id="IPR008264">
    <property type="entry name" value="Beta_glucanase"/>
</dbReference>
<dbReference type="InterPro" id="IPR013320">
    <property type="entry name" value="ConA-like_dom_sf"/>
</dbReference>
<dbReference type="InterPro" id="IPR000757">
    <property type="entry name" value="GH16"/>
</dbReference>
<dbReference type="InterPro" id="IPR008263">
    <property type="entry name" value="GH16_AS"/>
</dbReference>
<dbReference type="InterPro" id="IPR010713">
    <property type="entry name" value="XET_C"/>
</dbReference>
<dbReference type="InterPro" id="IPR016455">
    <property type="entry name" value="XTH"/>
</dbReference>
<dbReference type="PANTHER" id="PTHR31062">
    <property type="entry name" value="XYLOGLUCAN ENDOTRANSGLUCOSYLASE/HYDROLASE PROTEIN 8-RELATED"/>
    <property type="match status" value="1"/>
</dbReference>
<dbReference type="Pfam" id="PF00722">
    <property type="entry name" value="Glyco_hydro_16"/>
    <property type="match status" value="1"/>
</dbReference>
<dbReference type="Pfam" id="PF06955">
    <property type="entry name" value="XET_C"/>
    <property type="match status" value="1"/>
</dbReference>
<dbReference type="PIRSF" id="PIRSF005604">
    <property type="entry name" value="XET"/>
    <property type="match status" value="1"/>
</dbReference>
<dbReference type="PRINTS" id="PR00737">
    <property type="entry name" value="GLHYDRLASE16"/>
</dbReference>
<dbReference type="SUPFAM" id="SSF49899">
    <property type="entry name" value="Concanavalin A-like lectins/glucanases"/>
    <property type="match status" value="1"/>
</dbReference>
<dbReference type="PROSITE" id="PS01034">
    <property type="entry name" value="GH16_1"/>
    <property type="match status" value="1"/>
</dbReference>
<dbReference type="PROSITE" id="PS51762">
    <property type="entry name" value="GH16_2"/>
    <property type="match status" value="1"/>
</dbReference>
<accession>G5DAC6</accession>
<sequence length="287" mass="32903">MAFMSFINGFSTLFLVALLASSMMAAKGGNFYQDFDVTWGDHRAKIFNGGQLLSLSLDKTSGSGFRSKKEYLFGRIDMQLKLVAGNSAGTVTAYYLSSQGPTHDEIDFEFLGNLSGDPYIVHTNVFTQGKGNREQQFYLWFDPTRNFHTYSVVWNPRQIIFLIDNTPIRVFKNAESIGVPFPKNQPMRIYSSLWNADDWATRGGLVKTDWTKAPFTAYYRNFNAKTCSGACTESFGDGAWQSQELDAHSRRRLRWVQKNFMIYNYCTDLKRFPEGLPKECQRRSRFL</sequence>
<feature type="signal peptide" evidence="7">
    <location>
        <begin position="1"/>
        <end position="28"/>
    </location>
</feature>
<feature type="chain" id="PRO_5005132398" description="Xyloglucan endotransglucosylase protein 1" evidence="7">
    <location>
        <begin position="29"/>
        <end position="287"/>
    </location>
</feature>
<feature type="domain" description="GH16" evidence="5 14">
    <location>
        <begin position="29"/>
        <end position="219"/>
    </location>
</feature>
<feature type="active site" description="Nucleophile" evidence="2 6">
    <location>
        <position position="105"/>
    </location>
</feature>
<feature type="active site" description="Proton donor" evidence="2 6">
    <location>
        <position position="109"/>
    </location>
</feature>
<feature type="binding site" evidence="1">
    <location>
        <position position="109"/>
    </location>
    <ligand>
        <name>xyloglucan</name>
        <dbReference type="ChEBI" id="CHEBI:18233"/>
    </ligand>
</feature>
<feature type="binding site" evidence="1">
    <location>
        <begin position="122"/>
        <end position="124"/>
    </location>
    <ligand>
        <name>xyloglucan</name>
        <dbReference type="ChEBI" id="CHEBI:18233"/>
    </ligand>
</feature>
<feature type="binding site" evidence="1">
    <location>
        <begin position="132"/>
        <end position="134"/>
    </location>
    <ligand>
        <name>xyloglucan</name>
        <dbReference type="ChEBI" id="CHEBI:18233"/>
    </ligand>
</feature>
<feature type="binding site" evidence="1">
    <location>
        <begin position="198"/>
        <end position="199"/>
    </location>
    <ligand>
        <name>xyloglucan</name>
        <dbReference type="ChEBI" id="CHEBI:18233"/>
    </ligand>
</feature>
<feature type="binding site" evidence="1">
    <location>
        <position position="203"/>
    </location>
    <ligand>
        <name>xyloglucan</name>
        <dbReference type="ChEBI" id="CHEBI:18233"/>
    </ligand>
</feature>
<feature type="binding site" evidence="1">
    <location>
        <position position="271"/>
    </location>
    <ligand>
        <name>xyloglucan</name>
        <dbReference type="ChEBI" id="CHEBI:18233"/>
    </ligand>
</feature>
<feature type="site" description="Important for catalytic activity" evidence="1">
    <location>
        <position position="107"/>
    </location>
</feature>
<feature type="glycosylation site" description="N-linked (GlcNAc...) asparagine" evidence="3 4">
    <location>
        <position position="113"/>
    </location>
</feature>
<feature type="disulfide bond" evidence="1">
    <location>
        <begin position="227"/>
        <end position="231"/>
    </location>
</feature>
<feature type="disulfide bond" evidence="1">
    <location>
        <begin position="266"/>
        <end position="280"/>
    </location>
</feature>
<gene>
    <name evidence="11 12 15" type="primary">XTH1</name>
</gene>
<reference evidence="15" key="1">
    <citation type="journal article" date="2013" name="Food Chem.">
        <title>Identification of xyloglucan endotransglucosylase/hydrolase genes (XTHs) and their expression in persimmon fruit as influenced by 1-methylcyclopropene and gibberellic acid during storage at ambient temperature.</title>
        <authorList>
            <person name="Zhu Q."/>
            <person name="Zhang Z."/>
            <person name="Rao J."/>
            <person name="Huber D.J."/>
            <person name="Lv J."/>
            <person name="Hou Y."/>
            <person name="Song K."/>
        </authorList>
    </citation>
    <scope>NUCLEOTIDE SEQUENCE [MRNA]</scope>
    <scope>TISSUE SPECIFICITY</scope>
    <scope>DEVELOPMENTAL STAGE</scope>
    <scope>INDUCTION</scope>
    <scope>PHYLOGENETIC ANALYSIS</scope>
    <source>
        <strain evidence="11">cv. Fuping Jianshi</strain>
        <tissue evidence="11">Fruit flesh</tissue>
    </source>
</reference>
<reference key="2">
    <citation type="journal article" date="2015" name="PLoS ONE">
        <title>Analysis of xyloglucan endotransglycosylase/hydrolase (XTH) genes and diverse roles of isoenzymes during persimmon fruit development and postharvest softening.</title>
        <authorList>
            <person name="Han Y."/>
            <person name="Zhu Q."/>
            <person name="Zhang Z."/>
            <person name="Meng K."/>
            <person name="Hou Y."/>
            <person name="Ban Q."/>
            <person name="Suo J."/>
            <person name="Rao J."/>
        </authorList>
    </citation>
    <scope>FUNCTION</scope>
    <scope>CATALYTIC ACTIVITY</scope>
    <scope>BIOPHYSICOCHEMICAL PROPERTIES</scope>
    <scope>SUBCELLULAR LOCATION</scope>
    <scope>TISSUE SPECIFICITY</scope>
    <scope>DEVELOPMENTAL STAGE</scope>
    <scope>INDUCTION</scope>
    <scope>PHYLOGENETIC ANALYSIS</scope>
    <source>
        <strain evidence="12">cv. Fuping Jianshi</strain>
    </source>
</reference>
<reference key="3">
    <citation type="journal article" date="2017" name="Plant Cell Rep.">
        <title>Overexpression of persimmon DkXTH1 enhanced tolerance to abiotic stress and delayed fruit softening in transgenic plants.</title>
        <authorList>
            <person name="Han Y."/>
            <person name="Han S."/>
            <person name="Ban Q."/>
            <person name="He Y."/>
            <person name="Jin M."/>
            <person name="Rao J."/>
        </authorList>
    </citation>
    <scope>FUNCTION</scope>
    <scope>TISSUE SPECIFICITY</scope>
    <scope>DEVELOPMENTAL STAGE</scope>
    <source>
        <strain evidence="13">cv. Ganmaokui</strain>
    </source>
</reference>
<name>XTH1_DIOKA</name>
<organism evidence="15">
    <name type="scientific">Diospyros kaki</name>
    <name type="common">Kaki persimmon</name>
    <name type="synonym">Diospyros chinensis</name>
    <dbReference type="NCBI Taxonomy" id="35925"/>
    <lineage>
        <taxon>Eukaryota</taxon>
        <taxon>Viridiplantae</taxon>
        <taxon>Streptophyta</taxon>
        <taxon>Embryophyta</taxon>
        <taxon>Tracheophyta</taxon>
        <taxon>Spermatophyta</taxon>
        <taxon>Magnoliopsida</taxon>
        <taxon>eudicotyledons</taxon>
        <taxon>Gunneridae</taxon>
        <taxon>Pentapetalae</taxon>
        <taxon>asterids</taxon>
        <taxon>Ericales</taxon>
        <taxon>Ebenaceae</taxon>
        <taxon>Diospyros</taxon>
    </lineage>
</organism>
<keyword id="KW-0052">Apoplast</keyword>
<keyword id="KW-0134">Cell wall</keyword>
<keyword id="KW-0961">Cell wall biogenesis/degradation</keyword>
<keyword id="KW-1015">Disulfide bond</keyword>
<keyword id="KW-0292">Fruit ripening</keyword>
<keyword id="KW-0325">Glycoprotein</keyword>
<keyword id="KW-0326">Glycosidase</keyword>
<keyword id="KW-0328">Glycosyltransferase</keyword>
<keyword id="KW-0378">Hydrolase</keyword>
<keyword id="KW-0964">Secreted</keyword>
<keyword id="KW-0732">Signal</keyword>
<keyword id="KW-0808">Transferase</keyword>